<evidence type="ECO:0000250" key="1"/>
<evidence type="ECO:0000255" key="2"/>
<evidence type="ECO:0000255" key="3">
    <source>
        <dbReference type="PROSITE-ProRule" id="PRU00031"/>
    </source>
</evidence>
<evidence type="ECO:0000305" key="4"/>
<reference key="1">
    <citation type="journal article" date="2007" name="J. Proteome Res.">
        <title>Diversity of toxic components from the venom of the evolutionarily distinct black whip snake, Demansia vestigiata.</title>
        <authorList>
            <person name="St Pierre L."/>
            <person name="Birrell G.W."/>
            <person name="Earl S.T.H."/>
            <person name="Wallis T.P."/>
            <person name="Gorman J.J."/>
            <person name="de Jersey J."/>
            <person name="Masci P.P."/>
            <person name="Lavin M.F."/>
        </authorList>
    </citation>
    <scope>NUCLEOTIDE SEQUENCE [MRNA]</scope>
    <scope>PROTEIN SEQUENCE OF 56-70</scope>
    <scope>IDENTIFICATION BY MASS SPECTROMETRY</scope>
    <source>
        <tissue>Venom</tissue>
        <tissue>Venom gland</tissue>
    </source>
</reference>
<proteinExistence type="evidence at protein level"/>
<accession>A6MGY1</accession>
<comment type="function">
    <text evidence="1">Serine protease inhibitor.</text>
</comment>
<comment type="subcellular location">
    <subcellularLocation>
        <location evidence="1">Secreted</location>
    </subcellularLocation>
</comment>
<comment type="tissue specificity">
    <text>Expressed by the venom gland.</text>
</comment>
<comment type="similarity">
    <text evidence="4">Belongs to the venom Kunitz-type family.</text>
</comment>
<sequence>MSSGGLLLLLGLLTLWAELTPVSSKDRPEICKLPKEPGPCRSYLLYFYYNSVEHKCQTFHYGGCEGNENRFHTIEECKSTCAA</sequence>
<organism>
    <name type="scientific">Demansia vestigiata</name>
    <name type="common">Lesser black whip snake</name>
    <name type="synonym">Demansia atra</name>
    <dbReference type="NCBI Taxonomy" id="412038"/>
    <lineage>
        <taxon>Eukaryota</taxon>
        <taxon>Metazoa</taxon>
        <taxon>Chordata</taxon>
        <taxon>Craniata</taxon>
        <taxon>Vertebrata</taxon>
        <taxon>Euteleostomi</taxon>
        <taxon>Lepidosauria</taxon>
        <taxon>Squamata</taxon>
        <taxon>Bifurcata</taxon>
        <taxon>Unidentata</taxon>
        <taxon>Episquamata</taxon>
        <taxon>Toxicofera</taxon>
        <taxon>Serpentes</taxon>
        <taxon>Colubroidea</taxon>
        <taxon>Elapidae</taxon>
        <taxon>Notechinae</taxon>
        <taxon>Demansia</taxon>
    </lineage>
</organism>
<dbReference type="EMBL" id="EF025514">
    <property type="protein sequence ID" value="ABM86986.1"/>
    <property type="molecule type" value="mRNA"/>
</dbReference>
<dbReference type="SMR" id="A6MGY1"/>
<dbReference type="GO" id="GO:0005615">
    <property type="term" value="C:extracellular space"/>
    <property type="evidence" value="ECO:0007669"/>
    <property type="project" value="TreeGrafter"/>
</dbReference>
<dbReference type="GO" id="GO:0004867">
    <property type="term" value="F:serine-type endopeptidase inhibitor activity"/>
    <property type="evidence" value="ECO:0007669"/>
    <property type="project" value="UniProtKB-KW"/>
</dbReference>
<dbReference type="FunFam" id="4.10.410.10:FF:000021">
    <property type="entry name" value="Serine protease inhibitor, putative"/>
    <property type="match status" value="1"/>
</dbReference>
<dbReference type="Gene3D" id="4.10.410.10">
    <property type="entry name" value="Pancreatic trypsin inhibitor Kunitz domain"/>
    <property type="match status" value="1"/>
</dbReference>
<dbReference type="InterPro" id="IPR002223">
    <property type="entry name" value="Kunitz_BPTI"/>
</dbReference>
<dbReference type="InterPro" id="IPR036880">
    <property type="entry name" value="Kunitz_BPTI_sf"/>
</dbReference>
<dbReference type="InterPro" id="IPR020901">
    <property type="entry name" value="Prtase_inh_Kunz-CS"/>
</dbReference>
<dbReference type="InterPro" id="IPR050098">
    <property type="entry name" value="TFPI/VKTCI-like"/>
</dbReference>
<dbReference type="PANTHER" id="PTHR10083:SF374">
    <property type="entry name" value="BPTI_KUNITZ INHIBITOR DOMAIN-CONTAINING PROTEIN"/>
    <property type="match status" value="1"/>
</dbReference>
<dbReference type="PANTHER" id="PTHR10083">
    <property type="entry name" value="KUNITZ-TYPE PROTEASE INHIBITOR-RELATED"/>
    <property type="match status" value="1"/>
</dbReference>
<dbReference type="Pfam" id="PF00014">
    <property type="entry name" value="Kunitz_BPTI"/>
    <property type="match status" value="1"/>
</dbReference>
<dbReference type="PRINTS" id="PR00759">
    <property type="entry name" value="BASICPTASE"/>
</dbReference>
<dbReference type="SMART" id="SM00131">
    <property type="entry name" value="KU"/>
    <property type="match status" value="1"/>
</dbReference>
<dbReference type="SUPFAM" id="SSF57362">
    <property type="entry name" value="BPTI-like"/>
    <property type="match status" value="1"/>
</dbReference>
<dbReference type="PROSITE" id="PS00280">
    <property type="entry name" value="BPTI_KUNITZ_1"/>
    <property type="match status" value="1"/>
</dbReference>
<dbReference type="PROSITE" id="PS50279">
    <property type="entry name" value="BPTI_KUNITZ_2"/>
    <property type="match status" value="1"/>
</dbReference>
<keyword id="KW-0903">Direct protein sequencing</keyword>
<keyword id="KW-1015">Disulfide bond</keyword>
<keyword id="KW-0646">Protease inhibitor</keyword>
<keyword id="KW-0964">Secreted</keyword>
<keyword id="KW-0722">Serine protease inhibitor</keyword>
<keyword id="KW-0732">Signal</keyword>
<protein>
    <recommendedName>
        <fullName>Kunitz-type serine protease inhibitor vestiginin-7</fullName>
    </recommendedName>
</protein>
<feature type="signal peptide" evidence="2">
    <location>
        <begin position="1"/>
        <end position="24"/>
    </location>
</feature>
<feature type="chain" id="PRO_5000254138" description="Kunitz-type serine protease inhibitor vestiginin-7">
    <location>
        <begin position="25"/>
        <end position="83"/>
    </location>
</feature>
<feature type="domain" description="BPTI/Kunitz inhibitor" evidence="3">
    <location>
        <begin position="31"/>
        <end position="81"/>
    </location>
</feature>
<feature type="site" description="Reactive bond for trypsin" evidence="1">
    <location>
        <begin position="41"/>
        <end position="42"/>
    </location>
</feature>
<feature type="disulfide bond" evidence="3">
    <location>
        <begin position="31"/>
        <end position="81"/>
    </location>
</feature>
<feature type="disulfide bond" evidence="3">
    <location>
        <begin position="40"/>
        <end position="64"/>
    </location>
</feature>
<feature type="disulfide bond" evidence="3">
    <location>
        <begin position="56"/>
        <end position="77"/>
    </location>
</feature>
<name>VKT7_DEMVE</name>